<dbReference type="SMR" id="P86096"/>
<dbReference type="GO" id="GO:0005576">
    <property type="term" value="C:extracellular region"/>
    <property type="evidence" value="ECO:0000314"/>
    <property type="project" value="UniProtKB"/>
</dbReference>
<dbReference type="GO" id="GO:0030550">
    <property type="term" value="F:acetylcholine receptor inhibitor activity"/>
    <property type="evidence" value="ECO:0000314"/>
    <property type="project" value="UniProtKB"/>
</dbReference>
<dbReference type="GO" id="GO:0099106">
    <property type="term" value="F:ion channel regulator activity"/>
    <property type="evidence" value="ECO:0007669"/>
    <property type="project" value="UniProtKB-KW"/>
</dbReference>
<dbReference type="GO" id="GO:0090729">
    <property type="term" value="F:toxin activity"/>
    <property type="evidence" value="ECO:0000314"/>
    <property type="project" value="UniProtKB"/>
</dbReference>
<dbReference type="GO" id="GO:0044504">
    <property type="term" value="P:modulation of receptor activity in another organism"/>
    <property type="evidence" value="ECO:0000314"/>
    <property type="project" value="UniProtKB"/>
</dbReference>
<dbReference type="CDD" id="cd00206">
    <property type="entry name" value="TFP_snake_toxin"/>
    <property type="match status" value="1"/>
</dbReference>
<dbReference type="FunFam" id="2.10.60.10:FF:000024">
    <property type="entry name" value="Cytotoxin 1"/>
    <property type="match status" value="1"/>
</dbReference>
<dbReference type="Gene3D" id="2.10.60.10">
    <property type="entry name" value="CD59"/>
    <property type="match status" value="1"/>
</dbReference>
<dbReference type="InterPro" id="IPR003571">
    <property type="entry name" value="Snake_3FTx"/>
</dbReference>
<dbReference type="InterPro" id="IPR045860">
    <property type="entry name" value="Snake_toxin-like_sf"/>
</dbReference>
<dbReference type="InterPro" id="IPR054131">
    <property type="entry name" value="Toxin_cobra-type"/>
</dbReference>
<dbReference type="Pfam" id="PF21947">
    <property type="entry name" value="Toxin_cobra-type"/>
    <property type="match status" value="1"/>
</dbReference>
<dbReference type="SUPFAM" id="SSF57302">
    <property type="entry name" value="Snake toxin-like"/>
    <property type="match status" value="1"/>
</dbReference>
<evidence type="ECO:0000250" key="1">
    <source>
        <dbReference type="UniProtKB" id="Q9YGJ0"/>
    </source>
</evidence>
<evidence type="ECO:0000269" key="2">
    <source>
    </source>
</evidence>
<evidence type="ECO:0000303" key="3">
    <source>
    </source>
</evidence>
<evidence type="ECO:0000305" key="4"/>
<protein>
    <recommendedName>
        <fullName evidence="3">Long neurotoxin MS2</fullName>
    </recommendedName>
</protein>
<organism>
    <name type="scientific">Micrurus surinamensis</name>
    <name type="common">Surinam coral snake</name>
    <dbReference type="NCBI Taxonomy" id="129470"/>
    <lineage>
        <taxon>Eukaryota</taxon>
        <taxon>Metazoa</taxon>
        <taxon>Chordata</taxon>
        <taxon>Craniata</taxon>
        <taxon>Vertebrata</taxon>
        <taxon>Euteleostomi</taxon>
        <taxon>Lepidosauria</taxon>
        <taxon>Squamata</taxon>
        <taxon>Bifurcata</taxon>
        <taxon>Unidentata</taxon>
        <taxon>Episquamata</taxon>
        <taxon>Toxicofera</taxon>
        <taxon>Serpentes</taxon>
        <taxon>Colubroidea</taxon>
        <taxon>Elapidae</taxon>
        <taxon>Elapinae</taxon>
        <taxon>Micrurus</taxon>
    </lineage>
</organism>
<comment type="function">
    <text evidence="2">Produces peripheral paralysis by blocking neuromuscular transmission at the postsynaptic site. Very weak inhibitor of the endogenous nicotinic acetylcholine receptors (nAChR) in the human rhabdomyosarcoma TE 671 cell line. Not toxic to mice by intraperitoneal injection or to zebrafish by injection at the back of the dorsolateral region.</text>
</comment>
<comment type="subcellular location">
    <subcellularLocation>
        <location evidence="2">Secreted</location>
    </subcellularLocation>
</comment>
<comment type="tissue specificity">
    <text evidence="4">Expressed by the venom gland.</text>
</comment>
<comment type="similarity">
    <text evidence="4">Belongs to the three-finger toxin family. Ancestral subfamily.</text>
</comment>
<keyword id="KW-0008">Acetylcholine receptor inhibiting toxin</keyword>
<keyword id="KW-0903">Direct protein sequencing</keyword>
<keyword id="KW-1015">Disulfide bond</keyword>
<keyword id="KW-0872">Ion channel impairing toxin</keyword>
<keyword id="KW-0528">Neurotoxin</keyword>
<keyword id="KW-0629">Postsynaptic neurotoxin</keyword>
<keyword id="KW-0964">Secreted</keyword>
<keyword id="KW-0800">Toxin</keyword>
<feature type="chain" id="PRO_0000371719" description="Long neurotoxin MS2" evidence="2">
    <location>
        <begin position="1"/>
        <end position="64"/>
    </location>
</feature>
<feature type="disulfide bond" evidence="1">
    <location>
        <begin position="3"/>
        <end position="24"/>
    </location>
</feature>
<feature type="disulfide bond" evidence="1">
    <location>
        <begin position="6"/>
        <end position="11"/>
    </location>
</feature>
<feature type="disulfide bond" evidence="1">
    <location>
        <begin position="17"/>
        <end position="41"/>
    </location>
</feature>
<feature type="disulfide bond" evidence="1">
    <location>
        <begin position="45"/>
        <end position="57"/>
    </location>
</feature>
<feature type="disulfide bond" evidence="1">
    <location>
        <begin position="58"/>
        <end position="63"/>
    </location>
</feature>
<name>3NX2_MICSU</name>
<proteinExistence type="evidence at protein level"/>
<accession>P86096</accession>
<sequence>LTCHTCPYNTCANSETCPAGKNICYQKKWEEHQGERIERRCVANCPKLGSNDKSLLCCRRDDCN</sequence>
<reference key="1">
    <citation type="journal article" date="2008" name="Proteomics">
        <title>Proteomic analysis of the venom from the fish eating coral snake Micrurus surinamensis: novel toxins, their function and phylogeny.</title>
        <authorList>
            <person name="Olamendi-Portugal T."/>
            <person name="Batista C.V.F."/>
            <person name="Restano-Cassulini R."/>
            <person name="Pando V."/>
            <person name="Villa-Hernandez O."/>
            <person name="Zavaleta-Martinez-Vargas A."/>
            <person name="Salas-Arruz M.C."/>
            <person name="Rodriguez de la Vega R.C."/>
            <person name="Becerril B."/>
            <person name="Possani L.D."/>
        </authorList>
    </citation>
    <scope>PROTEIN SEQUENCE</scope>
    <scope>FUNCTION</scope>
    <scope>SUBCELLULAR LOCATION</scope>
    <source>
        <tissue>Venom</tissue>
    </source>
</reference>